<evidence type="ECO:0000255" key="1"/>
<evidence type="ECO:0000255" key="2">
    <source>
        <dbReference type="PROSITE-ProRule" id="PRU00628"/>
    </source>
</evidence>
<evidence type="ECO:0000269" key="3">
    <source>
    </source>
</evidence>
<evidence type="ECO:0000303" key="4">
    <source>
    </source>
</evidence>
<evidence type="ECO:0000305" key="5"/>
<evidence type="ECO:0000305" key="6">
    <source>
    </source>
</evidence>
<evidence type="ECO:0000312" key="7">
    <source>
        <dbReference type="EMBL" id="BAE94192.1"/>
    </source>
</evidence>
<evidence type="ECO:0000312" key="8">
    <source>
        <dbReference type="Proteomes" id="UP000005204"/>
    </source>
</evidence>
<proteinExistence type="evidence at protein level"/>
<name>NVD_BOMMO</name>
<feature type="chain" id="PRO_0000452606" description="Cholesterol 7-desaturase nvd">
    <location>
        <begin position="1"/>
        <end position="453"/>
    </location>
</feature>
<feature type="transmembrane region" description="Helical" evidence="1">
    <location>
        <begin position="53"/>
        <end position="73"/>
    </location>
</feature>
<feature type="domain" description="Rieske" evidence="2">
    <location>
        <begin position="126"/>
        <end position="229"/>
    </location>
</feature>
<feature type="binding site" evidence="2">
    <location>
        <position position="167"/>
    </location>
    <ligand>
        <name>[2Fe-2S] cluster</name>
        <dbReference type="ChEBI" id="CHEBI:190135"/>
    </ligand>
</feature>
<feature type="binding site" evidence="2">
    <location>
        <position position="169"/>
    </location>
    <ligand>
        <name>[2Fe-2S] cluster</name>
        <dbReference type="ChEBI" id="CHEBI:190135"/>
    </ligand>
</feature>
<feature type="binding site" evidence="2">
    <location>
        <position position="187"/>
    </location>
    <ligand>
        <name>[2Fe-2S] cluster</name>
        <dbReference type="ChEBI" id="CHEBI:190135"/>
    </ligand>
</feature>
<feature type="binding site" evidence="2">
    <location>
        <position position="190"/>
    </location>
    <ligand>
        <name>[2Fe-2S] cluster</name>
        <dbReference type="ChEBI" id="CHEBI:190135"/>
    </ligand>
</feature>
<feature type="sequence conflict" description="In Ref. 1; BAE94192." ref="1">
    <original>V</original>
    <variation>A</variation>
    <location>
        <position position="140"/>
    </location>
</feature>
<feature type="sequence conflict" description="In Ref. 1; BAE94192." ref="1">
    <original>I</original>
    <variation>V</variation>
    <location>
        <position position="227"/>
    </location>
</feature>
<feature type="sequence conflict" description="In Ref. 1; BAE94192." ref="1">
    <original>D</original>
    <variation>E</variation>
    <location>
        <position position="250"/>
    </location>
</feature>
<feature type="sequence conflict" description="In Ref. 1; BAE94192." ref="1">
    <original>A</original>
    <variation>V</variation>
    <location>
        <position position="362"/>
    </location>
</feature>
<feature type="sequence conflict" description="In Ref. 1; BAE94192." ref="1">
    <original>S</original>
    <variation>G</variation>
    <location>
        <position position="442"/>
    </location>
</feature>
<organism>
    <name type="scientific">Bombyx mori</name>
    <name type="common">Silk moth</name>
    <dbReference type="NCBI Taxonomy" id="7091"/>
    <lineage>
        <taxon>Eukaryota</taxon>
        <taxon>Metazoa</taxon>
        <taxon>Ecdysozoa</taxon>
        <taxon>Arthropoda</taxon>
        <taxon>Hexapoda</taxon>
        <taxon>Insecta</taxon>
        <taxon>Pterygota</taxon>
        <taxon>Neoptera</taxon>
        <taxon>Endopterygota</taxon>
        <taxon>Lepidoptera</taxon>
        <taxon>Glossata</taxon>
        <taxon>Ditrysia</taxon>
        <taxon>Bombycoidea</taxon>
        <taxon>Bombycidae</taxon>
        <taxon>Bombycinae</taxon>
        <taxon>Bombyx</taxon>
    </lineage>
</organism>
<keyword id="KW-0001">2Fe-2S</keyword>
<keyword id="KW-0153">Cholesterol metabolism</keyword>
<keyword id="KW-0408">Iron</keyword>
<keyword id="KW-0411">Iron-sulfur</keyword>
<keyword id="KW-0443">Lipid metabolism</keyword>
<keyword id="KW-0472">Membrane</keyword>
<keyword id="KW-0479">Metal-binding</keyword>
<keyword id="KW-0560">Oxidoreductase</keyword>
<keyword id="KW-1185">Reference proteome</keyword>
<keyword id="KW-0753">Steroid metabolism</keyword>
<keyword id="KW-1207">Sterol metabolism</keyword>
<keyword id="KW-0812">Transmembrane</keyword>
<keyword id="KW-1133">Transmembrane helix</keyword>
<comment type="function">
    <text evidence="3">Catalyzes the production of 7-dehydrocholesterol (7-DHC or cholesta-5,7-dien-3beta-ol) by inserting a double bond (desaturating) at the C7-C8 single bond of cholesterol. Essential regulator of steroid biosynthesis as this reaction is the first step in the synthesis of the steroid hormone Delta(7)-dafachronic acid.</text>
</comment>
<comment type="catalytic activity">
    <reaction evidence="3">
        <text>cholesterol + NADPH + O2 + H(+) = 7-dehydrocholesterol + NADP(+) + 2 H2O</text>
        <dbReference type="Rhea" id="RHEA:45024"/>
        <dbReference type="ChEBI" id="CHEBI:15377"/>
        <dbReference type="ChEBI" id="CHEBI:15378"/>
        <dbReference type="ChEBI" id="CHEBI:15379"/>
        <dbReference type="ChEBI" id="CHEBI:16113"/>
        <dbReference type="ChEBI" id="CHEBI:17759"/>
        <dbReference type="ChEBI" id="CHEBI:57783"/>
        <dbReference type="ChEBI" id="CHEBI:58349"/>
        <dbReference type="EC" id="1.14.19.21"/>
    </reaction>
    <physiologicalReaction direction="left-to-right" evidence="6">
        <dbReference type="Rhea" id="RHEA:45025"/>
    </physiologicalReaction>
</comment>
<comment type="catalytic activity">
    <reaction evidence="3">
        <text>cholesterol + NADH + O2 + H(+) = 7-dehydrocholesterol + NAD(+) + 2 H2O</text>
        <dbReference type="Rhea" id="RHEA:51644"/>
        <dbReference type="ChEBI" id="CHEBI:15377"/>
        <dbReference type="ChEBI" id="CHEBI:15378"/>
        <dbReference type="ChEBI" id="CHEBI:15379"/>
        <dbReference type="ChEBI" id="CHEBI:16113"/>
        <dbReference type="ChEBI" id="CHEBI:17759"/>
        <dbReference type="ChEBI" id="CHEBI:57540"/>
        <dbReference type="ChEBI" id="CHEBI:57945"/>
        <dbReference type="EC" id="1.14.19.21"/>
    </reaction>
    <physiologicalReaction direction="left-to-right" evidence="6">
        <dbReference type="Rhea" id="RHEA:51645"/>
    </physiologicalReaction>
</comment>
<comment type="cofactor">
    <cofactor evidence="2">
        <name>[2Fe-2S] cluster</name>
        <dbReference type="ChEBI" id="CHEBI:190135"/>
    </cofactor>
    <text evidence="2">Binds 1 [2Fe-2S] cluster per subunit.</text>
</comment>
<comment type="pathway">
    <text evidence="6">Steroid hormone biosynthesis; dafachronic acid biosynthesis.</text>
</comment>
<comment type="subcellular location">
    <subcellularLocation>
        <location evidence="1">Membrane</location>
        <topology evidence="1">Single-pass membrane protein</topology>
    </subcellularLocation>
</comment>
<comment type="similarity">
    <text evidence="5">Belongs to the cholesterol 7-desaturase family.</text>
</comment>
<comment type="sequence caution" evidence="5">
    <conflict type="erroneous gene model prediction">
        <sequence resource="EMBL" id="BABH01021056"/>
    </conflict>
</comment>
<accession>Q1JUZ2</accession>
<accession>H9IWP6</accession>
<protein>
    <recommendedName>
        <fullName>Cholesterol 7-desaturase nvd</fullName>
        <ecNumber evidence="3">1.14.19.21</ecNumber>
    </recommendedName>
    <alternativeName>
        <fullName evidence="4">Neverland</fullName>
        <shortName evidence="4">Nvd_Bm</shortName>
    </alternativeName>
    <alternativeName>
        <fullName evidence="7">Rieske-domain protein Neverland</fullName>
    </alternativeName>
</protein>
<gene>
    <name evidence="7" type="primary">nvd-Bm</name>
</gene>
<dbReference type="EC" id="1.14.19.21" evidence="3"/>
<dbReference type="EMBL" id="AB232986">
    <property type="protein sequence ID" value="BAE94192.1"/>
    <property type="molecule type" value="mRNA"/>
</dbReference>
<dbReference type="EMBL" id="BABH01021056">
    <property type="status" value="NOT_ANNOTATED_CDS"/>
    <property type="molecule type" value="Genomic_DNA"/>
</dbReference>
<dbReference type="RefSeq" id="NP_001037626.1">
    <property type="nucleotide sequence ID" value="NM_001044161.1"/>
</dbReference>
<dbReference type="SMR" id="Q1JUZ2"/>
<dbReference type="FunCoup" id="Q1JUZ2">
    <property type="interactions" value="14"/>
</dbReference>
<dbReference type="STRING" id="7091.H9IWP6"/>
<dbReference type="SwissLipids" id="SLP:000001121"/>
<dbReference type="PaxDb" id="7091-BGIBMGA001678-TA"/>
<dbReference type="GeneID" id="733067"/>
<dbReference type="KEGG" id="bmor:733067"/>
<dbReference type="CTD" id="5740633"/>
<dbReference type="eggNOG" id="ENOG502QS20">
    <property type="taxonomic scope" value="Eukaryota"/>
</dbReference>
<dbReference type="HOGENOM" id="CLU_037178_0_0_1"/>
<dbReference type="InParanoid" id="Q1JUZ2"/>
<dbReference type="OrthoDB" id="645784at7088"/>
<dbReference type="BRENDA" id="1.14.19.21">
    <property type="organism ID" value="890"/>
</dbReference>
<dbReference type="BRENDA" id="1.3.1.21">
    <property type="organism ID" value="890"/>
</dbReference>
<dbReference type="UniPathway" id="UPA01020"/>
<dbReference type="Proteomes" id="UP000005204">
    <property type="component" value="Unassembled WGS sequence"/>
</dbReference>
<dbReference type="GO" id="GO:0005737">
    <property type="term" value="C:cytoplasm"/>
    <property type="evidence" value="ECO:0007669"/>
    <property type="project" value="TreeGrafter"/>
</dbReference>
<dbReference type="GO" id="GO:0016020">
    <property type="term" value="C:membrane"/>
    <property type="evidence" value="ECO:0007669"/>
    <property type="project" value="UniProtKB-SubCell"/>
</dbReference>
<dbReference type="GO" id="GO:0051537">
    <property type="term" value="F:2 iron, 2 sulfur cluster binding"/>
    <property type="evidence" value="ECO:0007669"/>
    <property type="project" value="UniProtKB-KW"/>
</dbReference>
<dbReference type="GO" id="GO:0170056">
    <property type="term" value="F:cholesterol 7-desaturase (NAD(P)H) activity"/>
    <property type="evidence" value="ECO:0007669"/>
    <property type="project" value="UniProtKB-EC"/>
</dbReference>
<dbReference type="GO" id="GO:0046872">
    <property type="term" value="F:metal ion binding"/>
    <property type="evidence" value="ECO:0007669"/>
    <property type="project" value="UniProtKB-KW"/>
</dbReference>
<dbReference type="GO" id="GO:0008203">
    <property type="term" value="P:cholesterol metabolic process"/>
    <property type="evidence" value="ECO:0007669"/>
    <property type="project" value="UniProtKB-KW"/>
</dbReference>
<dbReference type="CDD" id="cd03469">
    <property type="entry name" value="Rieske_RO_Alpha_N"/>
    <property type="match status" value="1"/>
</dbReference>
<dbReference type="Gene3D" id="3.90.380.10">
    <property type="entry name" value="Naphthalene 1,2-dioxygenase Alpha Subunit, Chain A, domain 1"/>
    <property type="match status" value="1"/>
</dbReference>
<dbReference type="Gene3D" id="2.102.10.10">
    <property type="entry name" value="Rieske [2Fe-2S] iron-sulphur domain"/>
    <property type="match status" value="1"/>
</dbReference>
<dbReference type="InterPro" id="IPR050584">
    <property type="entry name" value="Cholesterol_7-desaturase"/>
</dbReference>
<dbReference type="InterPro" id="IPR045605">
    <property type="entry name" value="KshA-like_C"/>
</dbReference>
<dbReference type="InterPro" id="IPR017941">
    <property type="entry name" value="Rieske_2Fe-2S"/>
</dbReference>
<dbReference type="InterPro" id="IPR036922">
    <property type="entry name" value="Rieske_2Fe-2S_sf"/>
</dbReference>
<dbReference type="PANTHER" id="PTHR21266:SF32">
    <property type="entry name" value="CHOLESTEROL 7-DESATURASE NVD"/>
    <property type="match status" value="1"/>
</dbReference>
<dbReference type="PANTHER" id="PTHR21266">
    <property type="entry name" value="IRON-SULFUR DOMAIN CONTAINING PROTEIN"/>
    <property type="match status" value="1"/>
</dbReference>
<dbReference type="Pfam" id="PF19298">
    <property type="entry name" value="KshA_C"/>
    <property type="match status" value="1"/>
</dbReference>
<dbReference type="Pfam" id="PF00355">
    <property type="entry name" value="Rieske"/>
    <property type="match status" value="1"/>
</dbReference>
<dbReference type="SUPFAM" id="SSF55961">
    <property type="entry name" value="Bet v1-like"/>
    <property type="match status" value="1"/>
</dbReference>
<dbReference type="SUPFAM" id="SSF50022">
    <property type="entry name" value="ISP domain"/>
    <property type="match status" value="1"/>
</dbReference>
<dbReference type="PROSITE" id="PS51296">
    <property type="entry name" value="RIESKE"/>
    <property type="match status" value="1"/>
</dbReference>
<reference key="1">
    <citation type="journal article" date="2006" name="Development">
        <title>Neverland is an evolutionally conserved Rieske-domain protein that is essential for ecdysone synthesis and insect growth.</title>
        <authorList>
            <person name="Yoshiyama T."/>
            <person name="Namiki T."/>
            <person name="Mita K."/>
            <person name="Kataoka H."/>
            <person name="Niwa R."/>
        </authorList>
    </citation>
    <scope>NUCLEOTIDE SEQUENCE [MRNA]</scope>
    <source>
        <strain evidence="7">Kinshu X Showa</strain>
    </source>
</reference>
<reference key="2">
    <citation type="journal article" date="2008" name="Insect Biochem. Mol. Biol.">
        <title>The genome of a lepidopteran model insect, the silkworm Bombyx mori.</title>
        <authorList>
            <consortium name="International Silkworm Genome Consortium"/>
        </authorList>
    </citation>
    <scope>NUCLEOTIDE SEQUENCE [LARGE SCALE GENOMIC DNA]</scope>
    <source>
        <strain evidence="8">p50T</strain>
    </source>
</reference>
<reference key="3">
    <citation type="journal article" date="2011" name="J. Biol. Chem.">
        <title>The conserved Rieske oxygenase DAF-36/Neverland is a novel cholesterol-metabolizing enzyme.</title>
        <authorList>
            <person name="Yoshiyama-Yanagawa T."/>
            <person name="Enya S."/>
            <person name="Shimada-Niwa Y."/>
            <person name="Yaguchi S."/>
            <person name="Haramoto Y."/>
            <person name="Matsuya T."/>
            <person name="Shiomi K."/>
            <person name="Sasakura Y."/>
            <person name="Takahashi S."/>
            <person name="Asashima M."/>
            <person name="Kataoka H."/>
            <person name="Niwa R."/>
        </authorList>
    </citation>
    <scope>FUNCTION</scope>
    <scope>CATALYTIC ACTIVITY</scope>
    <scope>PATHWAY</scope>
</reference>
<sequence length="453" mass="50950">MADRQHFPSAITEAVSSNTACPDTGPKAETTNIFLLLQRNITIESSKHVFSSIVEYILILTLMFAFSAILYVIYKSYISPVFYKKELTEVGFDHIPQGPDKGRRISRAQASRRMGSKLPPPYPNGWFAVAETRELKVGSVLSIDALGQNLCVYRGEDGLARCVDAYCPHLGANLAVGGTVRGSCIECPFHKWRFNAAGTCVSLPGSDIAPKGVSIRTWCVVETDGAIWIWHDAEGREPLWEITDPPELKDFGYRGRNEFEVSAHIQEIPENGADVPHLNAVHSSSLLSDLGERYPVLHEIIGRHVWNADWTKSDDHTSLMHITQEYKVLKYDLARIDVKVTQIGPGHVRLFLKTSVGPFYIAQSVTPLGPLLQKVIHRVYSPAYNAPVGAFLVRCEAYMFERDVTIWNSKRFVSAPAYVKTDKTIRTFRNWFGQFYSEHSLSFRDALQNPLDW</sequence>